<proteinExistence type="inferred from homology"/>
<sequence>MLKTRIIPCLDVADGRVVKGVNFVDLRDAGDPVEAARAYDAAGADELCFLDIHATHENRGTMYDLVTRTAEQCFMPLTVGGGVRTHQDVRALLLAGADKVSFNSAAVADPTVVAEAADRFGSQCIVVAIDAKTVAPGRWEIFTHGGRRATGIDAVAFACDVASRGAGEILLTSMDRDGTRAGFNLPLTRAISDAVPIPVIASGGVGTLDHLVEGVTEGGASAVLAASIFHFGEFTIGEAKAHMASAGIPVRLA</sequence>
<comment type="function">
    <text evidence="1">IGPS catalyzes the conversion of PRFAR and glutamine to IGP, AICAR and glutamate. The HisF subunit catalyzes the cyclization activity that produces IGP and AICAR from PRFAR using the ammonia provided by the HisH subunit.</text>
</comment>
<comment type="catalytic activity">
    <reaction evidence="1">
        <text>5-[(5-phospho-1-deoxy-D-ribulos-1-ylimino)methylamino]-1-(5-phospho-beta-D-ribosyl)imidazole-4-carboxamide + L-glutamine = D-erythro-1-(imidazol-4-yl)glycerol 3-phosphate + 5-amino-1-(5-phospho-beta-D-ribosyl)imidazole-4-carboxamide + L-glutamate + H(+)</text>
        <dbReference type="Rhea" id="RHEA:24793"/>
        <dbReference type="ChEBI" id="CHEBI:15378"/>
        <dbReference type="ChEBI" id="CHEBI:29985"/>
        <dbReference type="ChEBI" id="CHEBI:58278"/>
        <dbReference type="ChEBI" id="CHEBI:58359"/>
        <dbReference type="ChEBI" id="CHEBI:58475"/>
        <dbReference type="ChEBI" id="CHEBI:58525"/>
        <dbReference type="EC" id="4.3.2.10"/>
    </reaction>
</comment>
<comment type="pathway">
    <text evidence="1">Amino-acid biosynthesis; L-histidine biosynthesis; L-histidine from 5-phospho-alpha-D-ribose 1-diphosphate: step 5/9.</text>
</comment>
<comment type="subunit">
    <text evidence="1">Heterodimer of HisH and HisF.</text>
</comment>
<comment type="subcellular location">
    <subcellularLocation>
        <location evidence="1">Cytoplasm</location>
    </subcellularLocation>
</comment>
<comment type="similarity">
    <text evidence="1">Belongs to the HisA/HisF family.</text>
</comment>
<reference key="1">
    <citation type="submission" date="2007-02" db="EMBL/GenBank/DDBJ databases">
        <title>Complete sequence of chromosome 1 of Rhodobacter sphaeroides ATCC 17029.</title>
        <authorList>
            <person name="Copeland A."/>
            <person name="Lucas S."/>
            <person name="Lapidus A."/>
            <person name="Barry K."/>
            <person name="Detter J.C."/>
            <person name="Glavina del Rio T."/>
            <person name="Hammon N."/>
            <person name="Israni S."/>
            <person name="Dalin E."/>
            <person name="Tice H."/>
            <person name="Pitluck S."/>
            <person name="Kiss H."/>
            <person name="Brettin T."/>
            <person name="Bruce D."/>
            <person name="Han C."/>
            <person name="Tapia R."/>
            <person name="Gilna P."/>
            <person name="Schmutz J."/>
            <person name="Larimer F."/>
            <person name="Land M."/>
            <person name="Hauser L."/>
            <person name="Kyrpides N."/>
            <person name="Mikhailova N."/>
            <person name="Richardson P."/>
            <person name="Mackenzie C."/>
            <person name="Choudhary M."/>
            <person name="Donohue T.J."/>
            <person name="Kaplan S."/>
        </authorList>
    </citation>
    <scope>NUCLEOTIDE SEQUENCE [LARGE SCALE GENOMIC DNA]</scope>
    <source>
        <strain>ATCC 17029 / ATH 2.4.9</strain>
    </source>
</reference>
<dbReference type="EC" id="4.3.2.10" evidence="1"/>
<dbReference type="EMBL" id="CP000577">
    <property type="protein sequence ID" value="ABN76028.1"/>
    <property type="molecule type" value="Genomic_DNA"/>
</dbReference>
<dbReference type="RefSeq" id="WP_011840686.1">
    <property type="nucleotide sequence ID" value="NC_009049.1"/>
</dbReference>
<dbReference type="SMR" id="A3PI62"/>
<dbReference type="KEGG" id="rsh:Rsph17029_0917"/>
<dbReference type="HOGENOM" id="CLU_048577_4_0_5"/>
<dbReference type="UniPathway" id="UPA00031">
    <property type="reaction ID" value="UER00010"/>
</dbReference>
<dbReference type="GO" id="GO:0005737">
    <property type="term" value="C:cytoplasm"/>
    <property type="evidence" value="ECO:0007669"/>
    <property type="project" value="UniProtKB-SubCell"/>
</dbReference>
<dbReference type="GO" id="GO:0000107">
    <property type="term" value="F:imidazoleglycerol-phosphate synthase activity"/>
    <property type="evidence" value="ECO:0007669"/>
    <property type="project" value="UniProtKB-UniRule"/>
</dbReference>
<dbReference type="GO" id="GO:0016829">
    <property type="term" value="F:lyase activity"/>
    <property type="evidence" value="ECO:0007669"/>
    <property type="project" value="UniProtKB-KW"/>
</dbReference>
<dbReference type="GO" id="GO:0000105">
    <property type="term" value="P:L-histidine biosynthetic process"/>
    <property type="evidence" value="ECO:0007669"/>
    <property type="project" value="UniProtKB-UniRule"/>
</dbReference>
<dbReference type="CDD" id="cd04731">
    <property type="entry name" value="HisF"/>
    <property type="match status" value="1"/>
</dbReference>
<dbReference type="FunFam" id="3.20.20.70:FF:000006">
    <property type="entry name" value="Imidazole glycerol phosphate synthase subunit HisF"/>
    <property type="match status" value="1"/>
</dbReference>
<dbReference type="Gene3D" id="3.20.20.70">
    <property type="entry name" value="Aldolase class I"/>
    <property type="match status" value="1"/>
</dbReference>
<dbReference type="HAMAP" id="MF_01013">
    <property type="entry name" value="HisF"/>
    <property type="match status" value="1"/>
</dbReference>
<dbReference type="InterPro" id="IPR013785">
    <property type="entry name" value="Aldolase_TIM"/>
</dbReference>
<dbReference type="InterPro" id="IPR006062">
    <property type="entry name" value="His_biosynth"/>
</dbReference>
<dbReference type="InterPro" id="IPR004651">
    <property type="entry name" value="HisF"/>
</dbReference>
<dbReference type="InterPro" id="IPR050064">
    <property type="entry name" value="IGPS_HisA/HisF"/>
</dbReference>
<dbReference type="InterPro" id="IPR011060">
    <property type="entry name" value="RibuloseP-bd_barrel"/>
</dbReference>
<dbReference type="NCBIfam" id="TIGR00735">
    <property type="entry name" value="hisF"/>
    <property type="match status" value="1"/>
</dbReference>
<dbReference type="PANTHER" id="PTHR21235:SF2">
    <property type="entry name" value="IMIDAZOLE GLYCEROL PHOSPHATE SYNTHASE HISHF"/>
    <property type="match status" value="1"/>
</dbReference>
<dbReference type="PANTHER" id="PTHR21235">
    <property type="entry name" value="IMIDAZOLE GLYCEROL PHOSPHATE SYNTHASE SUBUNIT HISF/H IGP SYNTHASE SUBUNIT HISF/H"/>
    <property type="match status" value="1"/>
</dbReference>
<dbReference type="Pfam" id="PF00977">
    <property type="entry name" value="His_biosynth"/>
    <property type="match status" value="1"/>
</dbReference>
<dbReference type="SUPFAM" id="SSF51366">
    <property type="entry name" value="Ribulose-phoshate binding barrel"/>
    <property type="match status" value="1"/>
</dbReference>
<name>HIS6_CERS1</name>
<evidence type="ECO:0000255" key="1">
    <source>
        <dbReference type="HAMAP-Rule" id="MF_01013"/>
    </source>
</evidence>
<accession>A3PI62</accession>
<protein>
    <recommendedName>
        <fullName evidence="1">Imidazole glycerol phosphate synthase subunit HisF</fullName>
        <ecNumber evidence="1">4.3.2.10</ecNumber>
    </recommendedName>
    <alternativeName>
        <fullName evidence="1">IGP synthase cyclase subunit</fullName>
    </alternativeName>
    <alternativeName>
        <fullName evidence="1">IGP synthase subunit HisF</fullName>
    </alternativeName>
    <alternativeName>
        <fullName evidence="1">ImGP synthase subunit HisF</fullName>
        <shortName evidence="1">IGPS subunit HisF</shortName>
    </alternativeName>
</protein>
<keyword id="KW-0028">Amino-acid biosynthesis</keyword>
<keyword id="KW-0963">Cytoplasm</keyword>
<keyword id="KW-0368">Histidine biosynthesis</keyword>
<keyword id="KW-0456">Lyase</keyword>
<feature type="chain" id="PRO_1000063132" description="Imidazole glycerol phosphate synthase subunit HisF">
    <location>
        <begin position="1"/>
        <end position="253"/>
    </location>
</feature>
<feature type="active site" evidence="1">
    <location>
        <position position="11"/>
    </location>
</feature>
<feature type="active site" evidence="1">
    <location>
        <position position="130"/>
    </location>
</feature>
<organism>
    <name type="scientific">Cereibacter sphaeroides (strain ATCC 17029 / ATH 2.4.9)</name>
    <name type="common">Rhodobacter sphaeroides</name>
    <dbReference type="NCBI Taxonomy" id="349101"/>
    <lineage>
        <taxon>Bacteria</taxon>
        <taxon>Pseudomonadati</taxon>
        <taxon>Pseudomonadota</taxon>
        <taxon>Alphaproteobacteria</taxon>
        <taxon>Rhodobacterales</taxon>
        <taxon>Paracoccaceae</taxon>
        <taxon>Cereibacter</taxon>
    </lineage>
</organism>
<gene>
    <name evidence="1" type="primary">hisF</name>
    <name type="ordered locus">Rsph17029_0917</name>
</gene>